<comment type="interaction">
    <interactant intactId="EBI-9083477">
        <id>Q9P0B6</id>
    </interactant>
    <interactant intactId="EBI-743771">
        <id>Q92624</id>
        <label>APPBP2</label>
    </interactant>
    <organismsDiffer>false</organismsDiffer>
    <experiments>3</experiments>
</comment>
<comment type="interaction">
    <interactant intactId="EBI-9083477">
        <id>Q9P0B6</id>
    </interactant>
    <interactant intactId="EBI-13059134">
        <id>Q13520</id>
        <label>AQP6</label>
    </interactant>
    <organismsDiffer>false</organismsDiffer>
    <experiments>3</experiments>
</comment>
<comment type="interaction">
    <interactant intactId="EBI-9083477">
        <id>Q9P0B6</id>
    </interactant>
    <interactant intactId="EBI-17444777">
        <id>O43315</id>
        <label>AQP9</label>
    </interactant>
    <organismsDiffer>false</organismsDiffer>
    <experiments>3</experiments>
</comment>
<comment type="interaction">
    <interactant intactId="EBI-9083477">
        <id>Q9P0B6</id>
    </interactant>
    <interactant intactId="EBI-11343438">
        <id>Q3SXY8</id>
        <label>ARL13B</label>
    </interactant>
    <organismsDiffer>false</organismsDiffer>
    <experiments>3</experiments>
</comment>
<comment type="interaction">
    <interactant intactId="EBI-9083477">
        <id>Q9P0B6</id>
    </interactant>
    <interactant intactId="EBI-7797864">
        <id>P11912</id>
        <label>CD79A</label>
    </interactant>
    <organismsDiffer>false</organismsDiffer>
    <experiments>3</experiments>
</comment>
<comment type="interaction">
    <interactant intactId="EBI-9083477">
        <id>Q9P0B6</id>
    </interactant>
    <interactant intactId="EBI-18400628">
        <id>O00501</id>
        <label>CLDN5</label>
    </interactant>
    <organismsDiffer>false</organismsDiffer>
    <experiments>3</experiments>
</comment>
<comment type="interaction">
    <interactant intactId="EBI-9083477">
        <id>Q9P0B6</id>
    </interactant>
    <interactant intactId="EBI-13049264">
        <id>P49238-4</id>
        <label>CX3CR1</label>
    </interactant>
    <organismsDiffer>false</organismsDiffer>
    <experiments>3</experiments>
</comment>
<comment type="interaction">
    <interactant intactId="EBI-9083477">
        <id>Q9P0B6</id>
    </interactant>
    <interactant intactId="EBI-3915253">
        <id>Q15125</id>
        <label>EBP</label>
    </interactant>
    <organismsDiffer>false</organismsDiffer>
    <experiments>3</experiments>
</comment>
<comment type="interaction">
    <interactant intactId="EBI-9083477">
        <id>Q9P0B6</id>
    </interactant>
    <interactant intactId="EBI-18535450">
        <id>Q9GZR5</id>
        <label>ELOVL4</label>
    </interactant>
    <organismsDiffer>false</organismsDiffer>
    <experiments>3</experiments>
</comment>
<comment type="interaction">
    <interactant intactId="EBI-9083477">
        <id>Q9P0B6</id>
    </interactant>
    <interactant intactId="EBI-781551">
        <id>Q9Y282</id>
        <label>ERGIC3</label>
    </interactant>
    <organismsDiffer>false</organismsDiffer>
    <experiments>3</experiments>
</comment>
<comment type="interaction">
    <interactant intactId="EBI-9083477">
        <id>Q9P0B6</id>
    </interactant>
    <interactant intactId="EBI-18636064">
        <id>Q8TBP5</id>
        <label>FAM174A</label>
    </interactant>
    <organismsDiffer>false</organismsDiffer>
    <experiments>3</experiments>
</comment>
<comment type="interaction">
    <interactant intactId="EBI-9083477">
        <id>Q9P0B6</id>
    </interactant>
    <interactant intactId="EBI-18938272">
        <id>Q96KR6</id>
        <label>FAM210B</label>
    </interactant>
    <organismsDiffer>false</organismsDiffer>
    <experiments>3</experiments>
</comment>
<comment type="interaction">
    <interactant intactId="EBI-9083477">
        <id>Q9P0B6</id>
    </interactant>
    <interactant intactId="EBI-2833872">
        <id>O15552</id>
        <label>FFAR2</label>
    </interactant>
    <organismsDiffer>false</organismsDiffer>
    <experiments>3</experiments>
</comment>
<comment type="interaction">
    <interactant intactId="EBI-9083477">
        <id>Q9P0B6</id>
    </interactant>
    <interactant intactId="EBI-17458373">
        <id>P48165</id>
        <label>GJA8</label>
    </interactant>
    <organismsDiffer>false</organismsDiffer>
    <experiments>3</experiments>
</comment>
<comment type="interaction">
    <interactant intactId="EBI-9083477">
        <id>Q9P0B6</id>
    </interactant>
    <interactant intactId="EBI-17231387">
        <id>Q6ZVE7</id>
        <label>GOLT1A</label>
    </interactant>
    <organismsDiffer>false</organismsDiffer>
    <experiments>3</experiments>
</comment>
<comment type="interaction">
    <interactant intactId="EBI-9083477">
        <id>Q9P0B6</id>
    </interactant>
    <interactant intactId="EBI-13345167">
        <id>Q8TDT2</id>
        <label>GPR152</label>
    </interactant>
    <organismsDiffer>false</organismsDiffer>
    <experiments>3</experiments>
</comment>
<comment type="interaction">
    <interactant intactId="EBI-9083477">
        <id>Q9P0B6</id>
    </interactant>
    <interactant intactId="EBI-18076404">
        <id>O15529</id>
        <label>GPR42</label>
    </interactant>
    <organismsDiffer>false</organismsDiffer>
    <experiments>3</experiments>
</comment>
<comment type="interaction">
    <interactant intactId="EBI-9083477">
        <id>Q9P0B6</id>
    </interactant>
    <interactant intactId="EBI-18053395">
        <id>Q7Z5P4</id>
        <label>HSD17B13</label>
    </interactant>
    <organismsDiffer>false</organismsDiffer>
    <experiments>3</experiments>
</comment>
<comment type="interaction">
    <interactant intactId="EBI-9083477">
        <id>Q9P0B6</id>
    </interactant>
    <interactant intactId="EBI-12806656">
        <id>Q96HJ5</id>
        <label>MS4A3</label>
    </interactant>
    <organismsDiffer>false</organismsDiffer>
    <experiments>3</experiments>
</comment>
<comment type="interaction">
    <interactant intactId="EBI-9083477">
        <id>Q9P0B6</id>
    </interactant>
    <interactant intactId="EBI-17263240">
        <id>P15941-11</id>
        <label>MUC1</label>
    </interactant>
    <organismsDiffer>false</organismsDiffer>
    <experiments>3</experiments>
</comment>
<comment type="interaction">
    <interactant intactId="EBI-9083477">
        <id>Q9P0B6</id>
    </interactant>
    <interactant intactId="EBI-17702144">
        <id>Q7RTP0</id>
        <label>NIPA1</label>
    </interactant>
    <organismsDiffer>false</organismsDiffer>
    <experiments>3</experiments>
</comment>
<comment type="interaction">
    <interactant intactId="EBI-9083477">
        <id>Q9P0B6</id>
    </interactant>
    <interactant intactId="EBI-12807478">
        <id>P35372-10</id>
        <label>OPRM1</label>
    </interactant>
    <organismsDiffer>false</organismsDiffer>
    <experiments>3</experiments>
</comment>
<comment type="interaction">
    <interactant intactId="EBI-9083477">
        <id>Q9P0B6</id>
    </interactant>
    <interactant intactId="EBI-10192441">
        <id>Q86VR2</id>
        <label>RETREG3</label>
    </interactant>
    <organismsDiffer>false</organismsDiffer>
    <experiments>3</experiments>
</comment>
<comment type="interaction">
    <interactant intactId="EBI-9083477">
        <id>Q9P0B6</id>
    </interactant>
    <interactant intactId="EBI-18159983">
        <id>Q3KNW5</id>
        <label>SLC10A6</label>
    </interactant>
    <organismsDiffer>false</organismsDiffer>
    <experiments>3</experiments>
</comment>
<comment type="interaction">
    <interactant intactId="EBI-9083477">
        <id>Q9P0B6</id>
    </interactant>
    <interactant intactId="EBI-17598000">
        <id>Q16572</id>
        <label>SLC18A3</label>
    </interactant>
    <organismsDiffer>false</organismsDiffer>
    <experiments>3</experiments>
</comment>
<comment type="interaction">
    <interactant intactId="EBI-9083477">
        <id>Q9P0B6</id>
    </interactant>
    <interactant intactId="EBI-17295964">
        <id>Q9NQQ7-3</id>
        <label>SLC35C2</label>
    </interactant>
    <organismsDiffer>false</organismsDiffer>
    <experiments>3</experiments>
</comment>
<comment type="interaction">
    <interactant intactId="EBI-9083477">
        <id>Q9P0B6</id>
    </interactant>
    <interactant intactId="EBI-5235586">
        <id>Q8TBB6</id>
        <label>SLC7A14</label>
    </interactant>
    <organismsDiffer>false</organismsDiffer>
    <experiments>3</experiments>
</comment>
<comment type="interaction">
    <interactant intactId="EBI-9083477">
        <id>Q9P0B6</id>
    </interactant>
    <interactant intactId="EBI-8032987">
        <id>Q8N9I0</id>
        <label>SYT2</label>
    </interactant>
    <organismsDiffer>false</organismsDiffer>
    <experiments>3</experiments>
</comment>
<comment type="interaction">
    <interactant intactId="EBI-9083477">
        <id>Q9P0B6</id>
    </interactant>
    <interactant intactId="EBI-6655287">
        <id>P25103</id>
        <label>TACR1</label>
    </interactant>
    <organismsDiffer>false</organismsDiffer>
    <experiments>3</experiments>
</comment>
<comment type="interaction">
    <interactant intactId="EBI-9083477">
        <id>Q9P0B6</id>
    </interactant>
    <interactant intactId="EBI-12947623">
        <id>Q96MV1</id>
        <label>TLCD4</label>
    </interactant>
    <organismsDiffer>false</organismsDiffer>
    <experiments>3</experiments>
</comment>
<comment type="interaction">
    <interactant intactId="EBI-9083477">
        <id>Q9P0B6</id>
    </interactant>
    <interactant intactId="EBI-6448756">
        <id>Q96DZ7</id>
        <label>TM4SF19</label>
    </interactant>
    <organismsDiffer>false</organismsDiffer>
    <experiments>3</experiments>
</comment>
<comment type="interaction">
    <interactant intactId="EBI-9083477">
        <id>Q9P0B6</id>
    </interactant>
    <interactant intactId="EBI-11724423">
        <id>Q7Z7N9</id>
        <label>TMEM179B</label>
    </interactant>
    <organismsDiffer>false</organismsDiffer>
    <experiments>3</experiments>
</comment>
<comment type="interaction">
    <interactant intactId="EBI-9083477">
        <id>Q9P0B6</id>
    </interactant>
    <interactant intactId="EBI-10982110">
        <id>Q96Q45-2</id>
        <label>TMEM237</label>
    </interactant>
    <organismsDiffer>false</organismsDiffer>
    <experiments>3</experiments>
</comment>
<comment type="interaction">
    <interactant intactId="EBI-9083477">
        <id>Q9P0B6</id>
    </interactant>
    <interactant intactId="EBI-726044">
        <id>Q9NW97</id>
        <label>TMEM51</label>
    </interactant>
    <organismsDiffer>false</organismsDiffer>
    <experiments>3</experiments>
</comment>
<comment type="interaction">
    <interactant intactId="EBI-9083477">
        <id>Q9P0B6</id>
    </interactant>
    <interactant intactId="EBI-11742770">
        <id>Q96HE8</id>
        <label>TMEM80</label>
    </interactant>
    <organismsDiffer>false</organismsDiffer>
    <experiments>3</experiments>
</comment>
<comment type="interaction">
    <interactant intactId="EBI-9083477">
        <id>Q9P0B6</id>
    </interactant>
    <interactant intactId="EBI-2548832">
        <id>Q8N661</id>
        <label>TMEM86B</label>
    </interactant>
    <organismsDiffer>false</organismsDiffer>
    <experiments>3</experiments>
</comment>
<comment type="interaction">
    <interactant intactId="EBI-9083477">
        <id>Q9P0B6</id>
    </interactant>
    <interactant intactId="EBI-6447886">
        <id>Q9Y320</id>
        <label>TMX2</label>
    </interactant>
    <organismsDiffer>false</organismsDiffer>
    <experiments>3</experiments>
</comment>
<comment type="subcellular location">
    <subcellularLocation>
        <location evidence="2">Membrane</location>
        <topology evidence="2">Single-pass membrane protein</topology>
    </subcellularLocation>
</comment>
<comment type="sequence caution" evidence="2">
    <conflict type="erroneous initiation">
        <sequence resource="EMBL-CDS" id="AAF28943"/>
    </conflict>
    <text>Extended N-terminus.</text>
</comment>
<comment type="sequence caution" evidence="2">
    <conflict type="erroneous initiation">
        <sequence resource="EMBL-CDS" id="AAH03515"/>
    </conflict>
    <text>Extended N-terminus.</text>
</comment>
<accession>Q9P0B6</accession>
<accession>Q5T7F7</accession>
<accession>Q9BTQ9</accession>
<dbReference type="EMBL" id="AF161383">
    <property type="protein sequence ID" value="AAF28943.1"/>
    <property type="status" value="ALT_INIT"/>
    <property type="molecule type" value="mRNA"/>
</dbReference>
<dbReference type="EMBL" id="AL353597">
    <property type="status" value="NOT_ANNOTATED_CDS"/>
    <property type="molecule type" value="Genomic_DNA"/>
</dbReference>
<dbReference type="EMBL" id="CH471081">
    <property type="protein sequence ID" value="EAX03947.1"/>
    <property type="molecule type" value="Genomic_DNA"/>
</dbReference>
<dbReference type="EMBL" id="BC003515">
    <property type="protein sequence ID" value="AAH03515.1"/>
    <property type="status" value="ALT_INIT"/>
    <property type="molecule type" value="mRNA"/>
</dbReference>
<dbReference type="EMBL" id="BC104835">
    <property type="protein sequence ID" value="AAI04836.1"/>
    <property type="molecule type" value="mRNA"/>
</dbReference>
<dbReference type="EMBL" id="BC108655">
    <property type="protein sequence ID" value="AAI08656.1"/>
    <property type="molecule type" value="mRNA"/>
</dbReference>
<dbReference type="CCDS" id="CCDS34441.1"/>
<dbReference type="RefSeq" id="NP_612502.1">
    <property type="nucleotide sequence ID" value="NM_138493.3"/>
</dbReference>
<dbReference type="SMR" id="Q9P0B6"/>
<dbReference type="BioGRID" id="127548">
    <property type="interactions" value="62"/>
</dbReference>
<dbReference type="FunCoup" id="Q9P0B6">
    <property type="interactions" value="138"/>
</dbReference>
<dbReference type="IntAct" id="Q9P0B6">
    <property type="interactions" value="51"/>
</dbReference>
<dbReference type="MINT" id="Q9P0B6"/>
<dbReference type="STRING" id="9606.ENSP00000362507"/>
<dbReference type="iPTMnet" id="Q9P0B6"/>
<dbReference type="PhosphoSitePlus" id="Q9P0B6"/>
<dbReference type="BioMuta" id="CCDC167"/>
<dbReference type="DMDM" id="160017504"/>
<dbReference type="jPOST" id="Q9P0B6"/>
<dbReference type="MassIVE" id="Q9P0B6"/>
<dbReference type="PaxDb" id="9606-ENSP00000362507"/>
<dbReference type="PeptideAtlas" id="Q9P0B6"/>
<dbReference type="ProteomicsDB" id="83547"/>
<dbReference type="Pumba" id="Q9P0B6"/>
<dbReference type="Antibodypedia" id="50913">
    <property type="antibodies" value="49 antibodies from 10 providers"/>
</dbReference>
<dbReference type="DNASU" id="154467"/>
<dbReference type="Ensembl" id="ENST00000373408.4">
    <property type="protein sequence ID" value="ENSP00000362507.3"/>
    <property type="gene ID" value="ENSG00000198937.9"/>
</dbReference>
<dbReference type="GeneID" id="154467"/>
<dbReference type="KEGG" id="hsa:154467"/>
<dbReference type="MANE-Select" id="ENST00000373408.4">
    <property type="protein sequence ID" value="ENSP00000362507.3"/>
    <property type="RefSeq nucleotide sequence ID" value="NM_138493.3"/>
    <property type="RefSeq protein sequence ID" value="NP_612502.1"/>
</dbReference>
<dbReference type="UCSC" id="uc003ont.4">
    <property type="organism name" value="human"/>
</dbReference>
<dbReference type="AGR" id="HGNC:21239"/>
<dbReference type="CTD" id="154467"/>
<dbReference type="DisGeNET" id="154467"/>
<dbReference type="GeneCards" id="CCDC167"/>
<dbReference type="HGNC" id="HGNC:21239">
    <property type="gene designation" value="CCDC167"/>
</dbReference>
<dbReference type="HPA" id="ENSG00000198937">
    <property type="expression patterns" value="Low tissue specificity"/>
</dbReference>
<dbReference type="neXtProt" id="NX_Q9P0B6"/>
<dbReference type="OpenTargets" id="ENSG00000198937"/>
<dbReference type="PharmGKB" id="PA134900129"/>
<dbReference type="VEuPathDB" id="HostDB:ENSG00000198937"/>
<dbReference type="eggNOG" id="ENOG502SAF4">
    <property type="taxonomic scope" value="Eukaryota"/>
</dbReference>
<dbReference type="GeneTree" id="ENSGT00390000010210"/>
<dbReference type="HOGENOM" id="CLU_152032_0_0_1"/>
<dbReference type="InParanoid" id="Q9P0B6"/>
<dbReference type="OMA" id="MAIMNER"/>
<dbReference type="OrthoDB" id="6435278at2759"/>
<dbReference type="PAN-GO" id="Q9P0B6">
    <property type="GO annotations" value="0 GO annotations based on evolutionary models"/>
</dbReference>
<dbReference type="PhylomeDB" id="Q9P0B6"/>
<dbReference type="TreeFam" id="TF336097"/>
<dbReference type="PathwayCommons" id="Q9P0B6"/>
<dbReference type="SignaLink" id="Q9P0B6"/>
<dbReference type="BioGRID-ORCS" id="154467">
    <property type="hits" value="17 hits in 1153 CRISPR screens"/>
</dbReference>
<dbReference type="ChiTaRS" id="CCDC167">
    <property type="organism name" value="human"/>
</dbReference>
<dbReference type="GenomeRNAi" id="154467"/>
<dbReference type="Pharos" id="Q9P0B6">
    <property type="development level" value="Tdark"/>
</dbReference>
<dbReference type="PRO" id="PR:Q9P0B6"/>
<dbReference type="Proteomes" id="UP000005640">
    <property type="component" value="Chromosome 6"/>
</dbReference>
<dbReference type="RNAct" id="Q9P0B6">
    <property type="molecule type" value="protein"/>
</dbReference>
<dbReference type="Bgee" id="ENSG00000198937">
    <property type="expression patterns" value="Expressed in ganglionic eminence and 173 other cell types or tissues"/>
</dbReference>
<dbReference type="GO" id="GO:0016020">
    <property type="term" value="C:membrane"/>
    <property type="evidence" value="ECO:0007669"/>
    <property type="project" value="UniProtKB-SubCell"/>
</dbReference>
<dbReference type="InterPro" id="IPR028194">
    <property type="entry name" value="CCDC-167"/>
</dbReference>
<dbReference type="PANTHER" id="PTHR31759">
    <property type="entry name" value="COILED-COIL DOMAIN-CONTAINING PROTEIN 167"/>
    <property type="match status" value="1"/>
</dbReference>
<dbReference type="PANTHER" id="PTHR31759:SF1">
    <property type="entry name" value="COILED-COIL DOMAIN-CONTAINING PROTEIN 167"/>
    <property type="match status" value="1"/>
</dbReference>
<dbReference type="Pfam" id="PF15188">
    <property type="entry name" value="CCDC-167"/>
    <property type="match status" value="1"/>
</dbReference>
<gene>
    <name type="primary">CCDC167</name>
    <name type="synonym">C6orf129</name>
    <name type="ORF">HSPC265</name>
</gene>
<name>CC167_HUMAN</name>
<proteinExistence type="evidence at protein level"/>
<protein>
    <recommendedName>
        <fullName>Coiled-coil domain-containing protein 167</fullName>
    </recommendedName>
</protein>
<evidence type="ECO:0000255" key="1"/>
<evidence type="ECO:0000305" key="2"/>
<keyword id="KW-0175">Coiled coil</keyword>
<keyword id="KW-0472">Membrane</keyword>
<keyword id="KW-1267">Proteomics identification</keyword>
<keyword id="KW-1185">Reference proteome</keyword>
<keyword id="KW-0812">Transmembrane</keyword>
<keyword id="KW-1133">Transmembrane helix</keyword>
<sequence length="97" mass="11459">MTKKKRENLGVALEIDGLEEKLSQCRRDLEAVNSRLHSRELSPEARRSLEKEKNSLMNKASNYEKELKFLRQENRKNMLLSVAIFILLTLVYAYWTM</sequence>
<organism>
    <name type="scientific">Homo sapiens</name>
    <name type="common">Human</name>
    <dbReference type="NCBI Taxonomy" id="9606"/>
    <lineage>
        <taxon>Eukaryota</taxon>
        <taxon>Metazoa</taxon>
        <taxon>Chordata</taxon>
        <taxon>Craniata</taxon>
        <taxon>Vertebrata</taxon>
        <taxon>Euteleostomi</taxon>
        <taxon>Mammalia</taxon>
        <taxon>Eutheria</taxon>
        <taxon>Euarchontoglires</taxon>
        <taxon>Primates</taxon>
        <taxon>Haplorrhini</taxon>
        <taxon>Catarrhini</taxon>
        <taxon>Hominidae</taxon>
        <taxon>Homo</taxon>
    </lineage>
</organism>
<feature type="chain" id="PRO_0000308550" description="Coiled-coil domain-containing protein 167">
    <location>
        <begin position="1"/>
        <end position="97"/>
    </location>
</feature>
<feature type="transmembrane region" description="Helical" evidence="1">
    <location>
        <begin position="78"/>
        <end position="95"/>
    </location>
</feature>
<feature type="coiled-coil region" evidence="1">
    <location>
        <begin position="10"/>
        <end position="79"/>
    </location>
</feature>
<reference key="1">
    <citation type="submission" date="1999-05" db="EMBL/GenBank/DDBJ databases">
        <title>Human partial CDS from CD34+ stem cells.</title>
        <authorList>
            <person name="Ye M."/>
            <person name="Zhang Q.-H."/>
            <person name="Zhou J."/>
            <person name="Shen Y."/>
            <person name="Wu X.-Y."/>
            <person name="Guan Z.Q."/>
            <person name="Wang L."/>
            <person name="Fan H.-Y."/>
            <person name="Mao Y.-F."/>
            <person name="Dai M."/>
            <person name="Huang Q.-H."/>
            <person name="Chen S.-J."/>
            <person name="Chen Z."/>
        </authorList>
    </citation>
    <scope>NUCLEOTIDE SEQUENCE [LARGE SCALE MRNA]</scope>
    <source>
        <tissue>Umbilical cord blood</tissue>
    </source>
</reference>
<reference key="2">
    <citation type="journal article" date="2003" name="Nature">
        <title>The DNA sequence and analysis of human chromosome 6.</title>
        <authorList>
            <person name="Mungall A.J."/>
            <person name="Palmer S.A."/>
            <person name="Sims S.K."/>
            <person name="Edwards C.A."/>
            <person name="Ashurst J.L."/>
            <person name="Wilming L."/>
            <person name="Jones M.C."/>
            <person name="Horton R."/>
            <person name="Hunt S.E."/>
            <person name="Scott C.E."/>
            <person name="Gilbert J.G.R."/>
            <person name="Clamp M.E."/>
            <person name="Bethel G."/>
            <person name="Milne S."/>
            <person name="Ainscough R."/>
            <person name="Almeida J.P."/>
            <person name="Ambrose K.D."/>
            <person name="Andrews T.D."/>
            <person name="Ashwell R.I.S."/>
            <person name="Babbage A.K."/>
            <person name="Bagguley C.L."/>
            <person name="Bailey J."/>
            <person name="Banerjee R."/>
            <person name="Barker D.J."/>
            <person name="Barlow K.F."/>
            <person name="Bates K."/>
            <person name="Beare D.M."/>
            <person name="Beasley H."/>
            <person name="Beasley O."/>
            <person name="Bird C.P."/>
            <person name="Blakey S.E."/>
            <person name="Bray-Allen S."/>
            <person name="Brook J."/>
            <person name="Brown A.J."/>
            <person name="Brown J.Y."/>
            <person name="Burford D.C."/>
            <person name="Burrill W."/>
            <person name="Burton J."/>
            <person name="Carder C."/>
            <person name="Carter N.P."/>
            <person name="Chapman J.C."/>
            <person name="Clark S.Y."/>
            <person name="Clark G."/>
            <person name="Clee C.M."/>
            <person name="Clegg S."/>
            <person name="Cobley V."/>
            <person name="Collier R.E."/>
            <person name="Collins J.E."/>
            <person name="Colman L.K."/>
            <person name="Corby N.R."/>
            <person name="Coville G.J."/>
            <person name="Culley K.M."/>
            <person name="Dhami P."/>
            <person name="Davies J."/>
            <person name="Dunn M."/>
            <person name="Earthrowl M.E."/>
            <person name="Ellington A.E."/>
            <person name="Evans K.A."/>
            <person name="Faulkner L."/>
            <person name="Francis M.D."/>
            <person name="Frankish A."/>
            <person name="Frankland J."/>
            <person name="French L."/>
            <person name="Garner P."/>
            <person name="Garnett J."/>
            <person name="Ghori M.J."/>
            <person name="Gilby L.M."/>
            <person name="Gillson C.J."/>
            <person name="Glithero R.J."/>
            <person name="Grafham D.V."/>
            <person name="Grant M."/>
            <person name="Gribble S."/>
            <person name="Griffiths C."/>
            <person name="Griffiths M.N.D."/>
            <person name="Hall R."/>
            <person name="Halls K.S."/>
            <person name="Hammond S."/>
            <person name="Harley J.L."/>
            <person name="Hart E.A."/>
            <person name="Heath P.D."/>
            <person name="Heathcott R."/>
            <person name="Holmes S.J."/>
            <person name="Howden P.J."/>
            <person name="Howe K.L."/>
            <person name="Howell G.R."/>
            <person name="Huckle E."/>
            <person name="Humphray S.J."/>
            <person name="Humphries M.D."/>
            <person name="Hunt A.R."/>
            <person name="Johnson C.M."/>
            <person name="Joy A.A."/>
            <person name="Kay M."/>
            <person name="Keenan S.J."/>
            <person name="Kimberley A.M."/>
            <person name="King A."/>
            <person name="Laird G.K."/>
            <person name="Langford C."/>
            <person name="Lawlor S."/>
            <person name="Leongamornlert D.A."/>
            <person name="Leversha M."/>
            <person name="Lloyd C.R."/>
            <person name="Lloyd D.M."/>
            <person name="Loveland J.E."/>
            <person name="Lovell J."/>
            <person name="Martin S."/>
            <person name="Mashreghi-Mohammadi M."/>
            <person name="Maslen G.L."/>
            <person name="Matthews L."/>
            <person name="McCann O.T."/>
            <person name="McLaren S.J."/>
            <person name="McLay K."/>
            <person name="McMurray A."/>
            <person name="Moore M.J.F."/>
            <person name="Mullikin J.C."/>
            <person name="Niblett D."/>
            <person name="Nickerson T."/>
            <person name="Novik K.L."/>
            <person name="Oliver K."/>
            <person name="Overton-Larty E.K."/>
            <person name="Parker A."/>
            <person name="Patel R."/>
            <person name="Pearce A.V."/>
            <person name="Peck A.I."/>
            <person name="Phillimore B.J.C.T."/>
            <person name="Phillips S."/>
            <person name="Plumb R.W."/>
            <person name="Porter K.M."/>
            <person name="Ramsey Y."/>
            <person name="Ranby S.A."/>
            <person name="Rice C.M."/>
            <person name="Ross M.T."/>
            <person name="Searle S.M."/>
            <person name="Sehra H.K."/>
            <person name="Sheridan E."/>
            <person name="Skuce C.D."/>
            <person name="Smith S."/>
            <person name="Smith M."/>
            <person name="Spraggon L."/>
            <person name="Squares S.L."/>
            <person name="Steward C.A."/>
            <person name="Sycamore N."/>
            <person name="Tamlyn-Hall G."/>
            <person name="Tester J."/>
            <person name="Theaker A.J."/>
            <person name="Thomas D.W."/>
            <person name="Thorpe A."/>
            <person name="Tracey A."/>
            <person name="Tromans A."/>
            <person name="Tubby B."/>
            <person name="Wall M."/>
            <person name="Wallis J.M."/>
            <person name="West A.P."/>
            <person name="White S.S."/>
            <person name="Whitehead S.L."/>
            <person name="Whittaker H."/>
            <person name="Wild A."/>
            <person name="Willey D.J."/>
            <person name="Wilmer T.E."/>
            <person name="Wood J.M."/>
            <person name="Wray P.W."/>
            <person name="Wyatt J.C."/>
            <person name="Young L."/>
            <person name="Younger R.M."/>
            <person name="Bentley D.R."/>
            <person name="Coulson A."/>
            <person name="Durbin R.M."/>
            <person name="Hubbard T."/>
            <person name="Sulston J.E."/>
            <person name="Dunham I."/>
            <person name="Rogers J."/>
            <person name="Beck S."/>
        </authorList>
    </citation>
    <scope>NUCLEOTIDE SEQUENCE [LARGE SCALE GENOMIC DNA]</scope>
</reference>
<reference key="3">
    <citation type="submission" date="2005-07" db="EMBL/GenBank/DDBJ databases">
        <authorList>
            <person name="Mural R.J."/>
            <person name="Istrail S."/>
            <person name="Sutton G.G."/>
            <person name="Florea L."/>
            <person name="Halpern A.L."/>
            <person name="Mobarry C.M."/>
            <person name="Lippert R."/>
            <person name="Walenz B."/>
            <person name="Shatkay H."/>
            <person name="Dew I."/>
            <person name="Miller J.R."/>
            <person name="Flanigan M.J."/>
            <person name="Edwards N.J."/>
            <person name="Bolanos R."/>
            <person name="Fasulo D."/>
            <person name="Halldorsson B.V."/>
            <person name="Hannenhalli S."/>
            <person name="Turner R."/>
            <person name="Yooseph S."/>
            <person name="Lu F."/>
            <person name="Nusskern D.R."/>
            <person name="Shue B.C."/>
            <person name="Zheng X.H."/>
            <person name="Zhong F."/>
            <person name="Delcher A.L."/>
            <person name="Huson D.H."/>
            <person name="Kravitz S.A."/>
            <person name="Mouchard L."/>
            <person name="Reinert K."/>
            <person name="Remington K.A."/>
            <person name="Clark A.G."/>
            <person name="Waterman M.S."/>
            <person name="Eichler E.E."/>
            <person name="Adams M.D."/>
            <person name="Hunkapiller M.W."/>
            <person name="Myers E.W."/>
            <person name="Venter J.C."/>
        </authorList>
    </citation>
    <scope>NUCLEOTIDE SEQUENCE [LARGE SCALE GENOMIC DNA]</scope>
</reference>
<reference key="4">
    <citation type="journal article" date="2004" name="Genome Res.">
        <title>The status, quality, and expansion of the NIH full-length cDNA project: the Mammalian Gene Collection (MGC).</title>
        <authorList>
            <consortium name="The MGC Project Team"/>
        </authorList>
    </citation>
    <scope>NUCLEOTIDE SEQUENCE [LARGE SCALE MRNA]</scope>
    <source>
        <tissue>Brain cortex</tissue>
        <tissue>Lung carcinoma</tissue>
        <tissue>Pancreatic carcinoma</tissue>
    </source>
</reference>
<reference key="5">
    <citation type="journal article" date="2011" name="BMC Syst. Biol.">
        <title>Initial characterization of the human central proteome.</title>
        <authorList>
            <person name="Burkard T.R."/>
            <person name="Planyavsky M."/>
            <person name="Kaupe I."/>
            <person name="Breitwieser F.P."/>
            <person name="Buerckstuemmer T."/>
            <person name="Bennett K.L."/>
            <person name="Superti-Furga G."/>
            <person name="Colinge J."/>
        </authorList>
    </citation>
    <scope>IDENTIFICATION BY MASS SPECTROMETRY [LARGE SCALE ANALYSIS]</scope>
</reference>